<organism>
    <name type="scientific">Bacillus subtilis (strain 168)</name>
    <dbReference type="NCBI Taxonomy" id="224308"/>
    <lineage>
        <taxon>Bacteria</taxon>
        <taxon>Bacillati</taxon>
        <taxon>Bacillota</taxon>
        <taxon>Bacilli</taxon>
        <taxon>Bacillales</taxon>
        <taxon>Bacillaceae</taxon>
        <taxon>Bacillus</taxon>
    </lineage>
</organism>
<proteinExistence type="evidence at protein level"/>
<sequence>MKKKSLTELISDLKGNENVVNWHEIEPREAKTRPMPESIDERIKAALSKRGIDELYTHQYSAFQYVQKGESIVTVTPTASGKTLCYNLPVLQSIAQDETNRALYLFPTKALAQDQKSELNEIIDEMGIDIKSFTYDGDTSPAIRQKVRKAGHIVITNPDMLHSAILPHHTKWVSLFENLKYIVIDELHTYRGVFGSHVANVIRRLKRICRFYGSDPVFICTSATIANPKELGEQLTGKPMRLVDDNGAPSGRKHFVFYNPPIVNKPLNIRRSATAEVNELAKEFLKNKVQTIVFARSRVRVEIILSHIQELVKKEIGTKSIRGYRGGYLPKERREIERGLREGDILGVVSTNALELGVDIGQLQVCVMTGYPGSVASAWQQAGRAGRRHGESLIIMVANSTPIDQYIVRHPEYFFNRSPESARINPENLIILVDHLKCAAYELPFRADEEFGAMEVSDILEYLQEEAVLHRNGERYHWASESFPASNISLRSASQENVVIVDQSDIANVRIIGEMDRFSAMTLLHDEAIYLHEGVQYQVEKLDWDHKKAYVRKVDVEYYTDANLAVQLKVLEIDKTKEKSRTSLHYGDVTVNALPTIFKKIKMTTFENIGSGPIHLPEEELHTSAAWLEIKTADEDIGEKTLEQLLLGISNVLQHIVPVYIMCDRNDVHVVSQIKAAHTGLPTIFLYDHYPGGIGLAEEVFKRFSDINEAAKQLITHCPCHDGCPSCIGTEIEGIKAKERILQLLDQMS</sequence>
<protein>
    <recommendedName>
        <fullName>Uncharacterized ATP-dependent helicase YprA</fullName>
        <ecNumber>3.6.4.-</ecNumber>
    </recommendedName>
</protein>
<accession>P50830</accession>
<gene>
    <name type="primary">yprA</name>
    <name type="ordered locus">BSU22220</name>
</gene>
<comment type="similarity">
    <text evidence="3">Belongs to the helicase family.</text>
</comment>
<feature type="chain" id="PRO_0000102195" description="Uncharacterized ATP-dependent helicase YprA">
    <location>
        <begin position="1"/>
        <end position="749"/>
    </location>
</feature>
<feature type="domain" description="Helicase ATP-binding" evidence="1">
    <location>
        <begin position="63"/>
        <end position="243"/>
    </location>
</feature>
<feature type="domain" description="Helicase C-terminal" evidence="2">
    <location>
        <begin position="276"/>
        <end position="430"/>
    </location>
</feature>
<feature type="short sequence motif" description="DEVH box">
    <location>
        <begin position="185"/>
        <end position="188"/>
    </location>
</feature>
<feature type="binding site" evidence="1">
    <location>
        <begin position="76"/>
        <end position="83"/>
    </location>
    <ligand>
        <name>ATP</name>
        <dbReference type="ChEBI" id="CHEBI:30616"/>
    </ligand>
</feature>
<feature type="helix" evidence="4">
    <location>
        <begin position="6"/>
        <end position="14"/>
    </location>
</feature>
<feature type="strand" evidence="4">
    <location>
        <begin position="15"/>
        <end position="17"/>
    </location>
</feature>
<feature type="strand" evidence="4">
    <location>
        <begin position="19"/>
        <end position="25"/>
    </location>
</feature>
<feature type="strand" evidence="4">
    <location>
        <begin position="32"/>
        <end position="34"/>
    </location>
</feature>
<feature type="helix" evidence="4">
    <location>
        <begin position="41"/>
        <end position="48"/>
    </location>
</feature>
<feature type="helix" evidence="4">
    <location>
        <begin position="49"/>
        <end position="51"/>
    </location>
</feature>
<feature type="strand" evidence="4">
    <location>
        <begin position="53"/>
        <end position="56"/>
    </location>
</feature>
<feature type="helix" evidence="4">
    <location>
        <begin position="57"/>
        <end position="68"/>
    </location>
</feature>
<feature type="strand" evidence="4">
    <location>
        <begin position="72"/>
        <end position="74"/>
    </location>
</feature>
<feature type="helix" evidence="4">
    <location>
        <begin position="78"/>
        <end position="80"/>
    </location>
</feature>
<feature type="helix" evidence="4">
    <location>
        <begin position="82"/>
        <end position="96"/>
    </location>
</feature>
<feature type="strand" evidence="4">
    <location>
        <begin position="101"/>
        <end position="105"/>
    </location>
</feature>
<feature type="helix" evidence="4">
    <location>
        <begin position="109"/>
        <end position="125"/>
    </location>
</feature>
<feature type="strand" evidence="4">
    <location>
        <begin position="132"/>
        <end position="134"/>
    </location>
</feature>
<feature type="strand" evidence="5">
    <location>
        <begin position="136"/>
        <end position="139"/>
    </location>
</feature>
<feature type="helix" evidence="4">
    <location>
        <begin position="141"/>
        <end position="150"/>
    </location>
</feature>
<feature type="strand" evidence="4">
    <location>
        <begin position="152"/>
        <end position="156"/>
    </location>
</feature>
<feature type="helix" evidence="4">
    <location>
        <begin position="158"/>
        <end position="163"/>
    </location>
</feature>
<feature type="helix" evidence="4">
    <location>
        <begin position="166"/>
        <end position="171"/>
    </location>
</feature>
<feature type="helix" evidence="4">
    <location>
        <begin position="173"/>
        <end position="176"/>
    </location>
</feature>
<feature type="strand" evidence="4">
    <location>
        <begin position="179"/>
        <end position="185"/>
    </location>
</feature>
<feature type="helix" evidence="4">
    <location>
        <begin position="187"/>
        <end position="189"/>
    </location>
</feature>
<feature type="helix" evidence="4">
    <location>
        <begin position="192"/>
        <end position="211"/>
    </location>
</feature>
<feature type="strand" evidence="4">
    <location>
        <begin position="217"/>
        <end position="221"/>
    </location>
</feature>
<feature type="helix" evidence="4">
    <location>
        <begin position="228"/>
        <end position="236"/>
    </location>
</feature>
<feature type="strand" evidence="4">
    <location>
        <begin position="241"/>
        <end position="243"/>
    </location>
</feature>
<feature type="strand" evidence="4">
    <location>
        <begin position="253"/>
        <end position="258"/>
    </location>
</feature>
<feature type="strand" evidence="4">
    <location>
        <begin position="262"/>
        <end position="264"/>
    </location>
</feature>
<feature type="turn" evidence="4">
    <location>
        <begin position="265"/>
        <end position="268"/>
    </location>
</feature>
<feature type="helix" evidence="4">
    <location>
        <begin position="273"/>
        <end position="286"/>
    </location>
</feature>
<feature type="strand" evidence="4">
    <location>
        <begin position="291"/>
        <end position="294"/>
    </location>
</feature>
<feature type="helix" evidence="4">
    <location>
        <begin position="298"/>
        <end position="312"/>
    </location>
</feature>
<feature type="turn" evidence="4">
    <location>
        <begin position="313"/>
        <end position="315"/>
    </location>
</feature>
<feature type="strand" evidence="4">
    <location>
        <begin position="321"/>
        <end position="324"/>
    </location>
</feature>
<feature type="helix" evidence="4">
    <location>
        <begin position="330"/>
        <end position="342"/>
    </location>
</feature>
<feature type="strand" evidence="4">
    <location>
        <begin position="347"/>
        <end position="350"/>
    </location>
</feature>
<feature type="helix" evidence="4">
    <location>
        <begin position="352"/>
        <end position="355"/>
    </location>
</feature>
<feature type="strand" evidence="4">
    <location>
        <begin position="363"/>
        <end position="370"/>
    </location>
</feature>
<feature type="helix" evidence="4">
    <location>
        <begin position="375"/>
        <end position="382"/>
    </location>
</feature>
<feature type="strand" evidence="4">
    <location>
        <begin position="388"/>
        <end position="390"/>
    </location>
</feature>
<feature type="strand" evidence="4">
    <location>
        <begin position="392"/>
        <end position="397"/>
    </location>
</feature>
<feature type="helix" evidence="4">
    <location>
        <begin position="402"/>
        <end position="409"/>
    </location>
</feature>
<feature type="helix" evidence="4">
    <location>
        <begin position="411"/>
        <end position="416"/>
    </location>
</feature>
<feature type="helix" evidence="4">
    <location>
        <begin position="429"/>
        <end position="442"/>
    </location>
</feature>
<feature type="strand" evidence="4">
    <location>
        <begin position="445"/>
        <end position="449"/>
    </location>
</feature>
<feature type="strand" evidence="4">
    <location>
        <begin position="451"/>
        <end position="454"/>
    </location>
</feature>
<feature type="helix" evidence="4">
    <location>
        <begin position="457"/>
        <end position="465"/>
    </location>
</feature>
<feature type="strand" evidence="4">
    <location>
        <begin position="468"/>
        <end position="472"/>
    </location>
</feature>
<feature type="strand" evidence="4">
    <location>
        <begin position="475"/>
        <end position="478"/>
    </location>
</feature>
<feature type="strand" evidence="5">
    <location>
        <begin position="479"/>
        <end position="481"/>
    </location>
</feature>
<feature type="helix" evidence="4">
    <location>
        <begin position="485"/>
        <end position="487"/>
    </location>
</feature>
<feature type="turn" evidence="4">
    <location>
        <begin position="490"/>
        <end position="493"/>
    </location>
</feature>
<feature type="strand" evidence="5">
    <location>
        <begin position="494"/>
        <end position="496"/>
    </location>
</feature>
<feature type="strand" evidence="4">
    <location>
        <begin position="497"/>
        <end position="502"/>
    </location>
</feature>
<feature type="helix" evidence="4">
    <location>
        <begin position="506"/>
        <end position="508"/>
    </location>
</feature>
<feature type="strand" evidence="4">
    <location>
        <begin position="510"/>
        <end position="516"/>
    </location>
</feature>
<feature type="helix" evidence="4">
    <location>
        <begin position="517"/>
        <end position="523"/>
    </location>
</feature>
<feature type="strand" evidence="4">
    <location>
        <begin position="529"/>
        <end position="532"/>
    </location>
</feature>
<feature type="strand" evidence="4">
    <location>
        <begin position="535"/>
        <end position="543"/>
    </location>
</feature>
<feature type="turn" evidence="4">
    <location>
        <begin position="544"/>
        <end position="547"/>
    </location>
</feature>
<feature type="strand" evidence="4">
    <location>
        <begin position="548"/>
        <end position="553"/>
    </location>
</feature>
<feature type="strand" evidence="4">
    <location>
        <begin position="557"/>
        <end position="562"/>
    </location>
</feature>
<feature type="strand" evidence="4">
    <location>
        <begin position="565"/>
        <end position="579"/>
    </location>
</feature>
<feature type="strand" evidence="4">
    <location>
        <begin position="582"/>
        <end position="594"/>
    </location>
</feature>
<feature type="strand" evidence="4">
    <location>
        <begin position="597"/>
        <end position="602"/>
    </location>
</feature>
<feature type="turn" evidence="4">
    <location>
        <begin position="603"/>
        <end position="605"/>
    </location>
</feature>
<feature type="strand" evidence="4">
    <location>
        <begin position="608"/>
        <end position="613"/>
    </location>
</feature>
<feature type="strand" evidence="4">
    <location>
        <begin position="619"/>
        <end position="630"/>
    </location>
</feature>
<feature type="helix" evidence="4">
    <location>
        <begin position="639"/>
        <end position="660"/>
    </location>
</feature>
<feature type="turn" evidence="4">
    <location>
        <begin position="665"/>
        <end position="667"/>
    </location>
</feature>
<feature type="strand" evidence="4">
    <location>
        <begin position="668"/>
        <end position="675"/>
    </location>
</feature>
<feature type="turn" evidence="4">
    <location>
        <begin position="677"/>
        <end position="679"/>
    </location>
</feature>
<feature type="strand" evidence="4">
    <location>
        <begin position="683"/>
        <end position="688"/>
    </location>
</feature>
<feature type="strand" evidence="4">
    <location>
        <begin position="690"/>
        <end position="692"/>
    </location>
</feature>
<feature type="helix" evidence="4">
    <location>
        <begin position="696"/>
        <end position="702"/>
    </location>
</feature>
<feature type="helix" evidence="4">
    <location>
        <begin position="704"/>
        <end position="717"/>
    </location>
</feature>
<feature type="strand" evidence="5">
    <location>
        <begin position="719"/>
        <end position="722"/>
    </location>
</feature>
<feature type="turn" evidence="4">
    <location>
        <begin position="725"/>
        <end position="728"/>
    </location>
</feature>
<feature type="helix" evidence="4">
    <location>
        <begin position="737"/>
        <end position="747"/>
    </location>
</feature>
<name>YPRA_BACSU</name>
<keyword id="KW-0002">3D-structure</keyword>
<keyword id="KW-0067">ATP-binding</keyword>
<keyword id="KW-0347">Helicase</keyword>
<keyword id="KW-0378">Hydrolase</keyword>
<keyword id="KW-0547">Nucleotide-binding</keyword>
<keyword id="KW-1185">Reference proteome</keyword>
<reference key="1">
    <citation type="journal article" date="1996" name="Microbiology">
        <title>Sequence analysis of the Bacillus subtilis chromosome region between the serA and kdg loci cloned in a yeast artificial chromosome.</title>
        <authorList>
            <person name="Sorokin A.V."/>
            <person name="Azevedo V."/>
            <person name="Zumstein E."/>
            <person name="Galleron N."/>
            <person name="Ehrlich S.D."/>
            <person name="Serror P."/>
        </authorList>
    </citation>
    <scope>NUCLEOTIDE SEQUENCE [GENOMIC DNA]</scope>
    <source>
        <strain>168 / Marburg / ATCC 6051 / DSM 10 / JCM 1465 / NBRC 13719 / NCIMB 3610 / NRRL NRS-744 / VKM B-501</strain>
    </source>
</reference>
<reference key="2">
    <citation type="journal article" date="1997" name="Nature">
        <title>The complete genome sequence of the Gram-positive bacterium Bacillus subtilis.</title>
        <authorList>
            <person name="Kunst F."/>
            <person name="Ogasawara N."/>
            <person name="Moszer I."/>
            <person name="Albertini A.M."/>
            <person name="Alloni G."/>
            <person name="Azevedo V."/>
            <person name="Bertero M.G."/>
            <person name="Bessieres P."/>
            <person name="Bolotin A."/>
            <person name="Borchert S."/>
            <person name="Borriss R."/>
            <person name="Boursier L."/>
            <person name="Brans A."/>
            <person name="Braun M."/>
            <person name="Brignell S.C."/>
            <person name="Bron S."/>
            <person name="Brouillet S."/>
            <person name="Bruschi C.V."/>
            <person name="Caldwell B."/>
            <person name="Capuano V."/>
            <person name="Carter N.M."/>
            <person name="Choi S.-K."/>
            <person name="Codani J.-J."/>
            <person name="Connerton I.F."/>
            <person name="Cummings N.J."/>
            <person name="Daniel R.A."/>
            <person name="Denizot F."/>
            <person name="Devine K.M."/>
            <person name="Duesterhoeft A."/>
            <person name="Ehrlich S.D."/>
            <person name="Emmerson P.T."/>
            <person name="Entian K.-D."/>
            <person name="Errington J."/>
            <person name="Fabret C."/>
            <person name="Ferrari E."/>
            <person name="Foulger D."/>
            <person name="Fritz C."/>
            <person name="Fujita M."/>
            <person name="Fujita Y."/>
            <person name="Fuma S."/>
            <person name="Galizzi A."/>
            <person name="Galleron N."/>
            <person name="Ghim S.-Y."/>
            <person name="Glaser P."/>
            <person name="Goffeau A."/>
            <person name="Golightly E.J."/>
            <person name="Grandi G."/>
            <person name="Guiseppi G."/>
            <person name="Guy B.J."/>
            <person name="Haga K."/>
            <person name="Haiech J."/>
            <person name="Harwood C.R."/>
            <person name="Henaut A."/>
            <person name="Hilbert H."/>
            <person name="Holsappel S."/>
            <person name="Hosono S."/>
            <person name="Hullo M.-F."/>
            <person name="Itaya M."/>
            <person name="Jones L.-M."/>
            <person name="Joris B."/>
            <person name="Karamata D."/>
            <person name="Kasahara Y."/>
            <person name="Klaerr-Blanchard M."/>
            <person name="Klein C."/>
            <person name="Kobayashi Y."/>
            <person name="Koetter P."/>
            <person name="Koningstein G."/>
            <person name="Krogh S."/>
            <person name="Kumano M."/>
            <person name="Kurita K."/>
            <person name="Lapidus A."/>
            <person name="Lardinois S."/>
            <person name="Lauber J."/>
            <person name="Lazarevic V."/>
            <person name="Lee S.-M."/>
            <person name="Levine A."/>
            <person name="Liu H."/>
            <person name="Masuda S."/>
            <person name="Mauel C."/>
            <person name="Medigue C."/>
            <person name="Medina N."/>
            <person name="Mellado R.P."/>
            <person name="Mizuno M."/>
            <person name="Moestl D."/>
            <person name="Nakai S."/>
            <person name="Noback M."/>
            <person name="Noone D."/>
            <person name="O'Reilly M."/>
            <person name="Ogawa K."/>
            <person name="Ogiwara A."/>
            <person name="Oudega B."/>
            <person name="Park S.-H."/>
            <person name="Parro V."/>
            <person name="Pohl T.M."/>
            <person name="Portetelle D."/>
            <person name="Porwollik S."/>
            <person name="Prescott A.M."/>
            <person name="Presecan E."/>
            <person name="Pujic P."/>
            <person name="Purnelle B."/>
            <person name="Rapoport G."/>
            <person name="Rey M."/>
            <person name="Reynolds S."/>
            <person name="Rieger M."/>
            <person name="Rivolta C."/>
            <person name="Rocha E."/>
            <person name="Roche B."/>
            <person name="Rose M."/>
            <person name="Sadaie Y."/>
            <person name="Sato T."/>
            <person name="Scanlan E."/>
            <person name="Schleich S."/>
            <person name="Schroeter R."/>
            <person name="Scoffone F."/>
            <person name="Sekiguchi J."/>
            <person name="Sekowska A."/>
            <person name="Seror S.J."/>
            <person name="Serror P."/>
            <person name="Shin B.-S."/>
            <person name="Soldo B."/>
            <person name="Sorokin A."/>
            <person name="Tacconi E."/>
            <person name="Takagi T."/>
            <person name="Takahashi H."/>
            <person name="Takemaru K."/>
            <person name="Takeuchi M."/>
            <person name="Tamakoshi A."/>
            <person name="Tanaka T."/>
            <person name="Terpstra P."/>
            <person name="Tognoni A."/>
            <person name="Tosato V."/>
            <person name="Uchiyama S."/>
            <person name="Vandenbol M."/>
            <person name="Vannier F."/>
            <person name="Vassarotti A."/>
            <person name="Viari A."/>
            <person name="Wambutt R."/>
            <person name="Wedler E."/>
            <person name="Wedler H."/>
            <person name="Weitzenegger T."/>
            <person name="Winters P."/>
            <person name="Wipat A."/>
            <person name="Yamamoto H."/>
            <person name="Yamane K."/>
            <person name="Yasumoto K."/>
            <person name="Yata K."/>
            <person name="Yoshida K."/>
            <person name="Yoshikawa H.-F."/>
            <person name="Zumstein E."/>
            <person name="Yoshikawa H."/>
            <person name="Danchin A."/>
        </authorList>
    </citation>
    <scope>NUCLEOTIDE SEQUENCE [LARGE SCALE GENOMIC DNA]</scope>
    <source>
        <strain>168</strain>
    </source>
</reference>
<evidence type="ECO:0000255" key="1">
    <source>
        <dbReference type="PROSITE-ProRule" id="PRU00541"/>
    </source>
</evidence>
<evidence type="ECO:0000255" key="2">
    <source>
        <dbReference type="PROSITE-ProRule" id="PRU00542"/>
    </source>
</evidence>
<evidence type="ECO:0000305" key="3"/>
<evidence type="ECO:0007829" key="4">
    <source>
        <dbReference type="PDB" id="6ZNP"/>
    </source>
</evidence>
<evidence type="ECO:0007829" key="5">
    <source>
        <dbReference type="PDB" id="6ZNS"/>
    </source>
</evidence>
<dbReference type="EC" id="3.6.4.-"/>
<dbReference type="EMBL" id="L47838">
    <property type="protein sequence ID" value="AAB38468.1"/>
    <property type="molecule type" value="Genomic_DNA"/>
</dbReference>
<dbReference type="EMBL" id="AL009126">
    <property type="protein sequence ID" value="CAB14139.1"/>
    <property type="molecule type" value="Genomic_DNA"/>
</dbReference>
<dbReference type="PIR" id="B69941">
    <property type="entry name" value="B69941"/>
</dbReference>
<dbReference type="RefSeq" id="NP_390104.1">
    <property type="nucleotide sequence ID" value="NC_000964.3"/>
</dbReference>
<dbReference type="RefSeq" id="WP_003246149.1">
    <property type="nucleotide sequence ID" value="NZ_OZ025638.1"/>
</dbReference>
<dbReference type="PDB" id="6ZNP">
    <property type="method" value="X-ray"/>
    <property type="resolution" value="3.16 A"/>
    <property type="chains" value="A/B=1-749"/>
</dbReference>
<dbReference type="PDB" id="6ZNQ">
    <property type="method" value="X-ray"/>
    <property type="resolution" value="3.34 A"/>
    <property type="chains" value="A/B=1-749"/>
</dbReference>
<dbReference type="PDB" id="6ZNS">
    <property type="method" value="X-ray"/>
    <property type="resolution" value="3.32 A"/>
    <property type="chains" value="A=1-749"/>
</dbReference>
<dbReference type="PDBsum" id="6ZNP"/>
<dbReference type="PDBsum" id="6ZNQ"/>
<dbReference type="PDBsum" id="6ZNS"/>
<dbReference type="SMR" id="P50830"/>
<dbReference type="FunCoup" id="P50830">
    <property type="interactions" value="525"/>
</dbReference>
<dbReference type="STRING" id="224308.BSU22220"/>
<dbReference type="PaxDb" id="224308-BSU22220"/>
<dbReference type="EnsemblBacteria" id="CAB14139">
    <property type="protein sequence ID" value="CAB14139"/>
    <property type="gene ID" value="BSU_22220"/>
</dbReference>
<dbReference type="GeneID" id="939052"/>
<dbReference type="KEGG" id="bsu:BSU22220"/>
<dbReference type="PATRIC" id="fig|224308.179.peg.2426"/>
<dbReference type="eggNOG" id="COG1111">
    <property type="taxonomic scope" value="Bacteria"/>
</dbReference>
<dbReference type="eggNOG" id="COG1205">
    <property type="taxonomic scope" value="Bacteria"/>
</dbReference>
<dbReference type="InParanoid" id="P50830"/>
<dbReference type="OrthoDB" id="143059at2"/>
<dbReference type="PhylomeDB" id="P50830"/>
<dbReference type="BioCyc" id="BSUB:BSU22220-MONOMER"/>
<dbReference type="Proteomes" id="UP000001570">
    <property type="component" value="Chromosome"/>
</dbReference>
<dbReference type="GO" id="GO:0043138">
    <property type="term" value="F:3'-5' DNA helicase activity"/>
    <property type="evidence" value="ECO:0000318"/>
    <property type="project" value="GO_Central"/>
</dbReference>
<dbReference type="GO" id="GO:0005524">
    <property type="term" value="F:ATP binding"/>
    <property type="evidence" value="ECO:0007669"/>
    <property type="project" value="UniProtKB-KW"/>
</dbReference>
<dbReference type="GO" id="GO:0016787">
    <property type="term" value="F:hydrolase activity"/>
    <property type="evidence" value="ECO:0007669"/>
    <property type="project" value="UniProtKB-KW"/>
</dbReference>
<dbReference type="GO" id="GO:0003676">
    <property type="term" value="F:nucleic acid binding"/>
    <property type="evidence" value="ECO:0007669"/>
    <property type="project" value="InterPro"/>
</dbReference>
<dbReference type="GO" id="GO:0036297">
    <property type="term" value="P:interstrand cross-link repair"/>
    <property type="evidence" value="ECO:0000318"/>
    <property type="project" value="GO_Central"/>
</dbReference>
<dbReference type="GO" id="GO:0006289">
    <property type="term" value="P:nucleotide-excision repair"/>
    <property type="evidence" value="ECO:0000318"/>
    <property type="project" value="GO_Central"/>
</dbReference>
<dbReference type="CDD" id="cd17923">
    <property type="entry name" value="DEXHc_Hrq1-like"/>
    <property type="match status" value="1"/>
</dbReference>
<dbReference type="CDD" id="cd18797">
    <property type="entry name" value="SF2_C_Hrq"/>
    <property type="match status" value="1"/>
</dbReference>
<dbReference type="Gene3D" id="3.40.50.300">
    <property type="entry name" value="P-loop containing nucleotide triphosphate hydrolases"/>
    <property type="match status" value="2"/>
</dbReference>
<dbReference type="InterPro" id="IPR011545">
    <property type="entry name" value="DEAD/DEAH_box_helicase_dom"/>
</dbReference>
<dbReference type="InterPro" id="IPR014001">
    <property type="entry name" value="Helicase_ATP-bd"/>
</dbReference>
<dbReference type="InterPro" id="IPR001650">
    <property type="entry name" value="Helicase_C-like"/>
</dbReference>
<dbReference type="InterPro" id="IPR055227">
    <property type="entry name" value="HRQ1_WHD"/>
</dbReference>
<dbReference type="InterPro" id="IPR018973">
    <property type="entry name" value="MZB"/>
</dbReference>
<dbReference type="InterPro" id="IPR027417">
    <property type="entry name" value="P-loop_NTPase"/>
</dbReference>
<dbReference type="PANTHER" id="PTHR47957">
    <property type="entry name" value="ATP-DEPENDENT HELICASE HRQ1"/>
    <property type="match status" value="1"/>
</dbReference>
<dbReference type="PANTHER" id="PTHR47957:SF3">
    <property type="entry name" value="ATP-DEPENDENT HELICASE HRQ1"/>
    <property type="match status" value="1"/>
</dbReference>
<dbReference type="Pfam" id="PF00270">
    <property type="entry name" value="DEAD"/>
    <property type="match status" value="1"/>
</dbReference>
<dbReference type="Pfam" id="PF00271">
    <property type="entry name" value="Helicase_C"/>
    <property type="match status" value="1"/>
</dbReference>
<dbReference type="Pfam" id="PF09369">
    <property type="entry name" value="MZB"/>
    <property type="match status" value="1"/>
</dbReference>
<dbReference type="Pfam" id="PF22982">
    <property type="entry name" value="WHD_HRQ1"/>
    <property type="match status" value="1"/>
</dbReference>
<dbReference type="SMART" id="SM00487">
    <property type="entry name" value="DEXDc"/>
    <property type="match status" value="1"/>
</dbReference>
<dbReference type="SMART" id="SM00490">
    <property type="entry name" value="HELICc"/>
    <property type="match status" value="1"/>
</dbReference>
<dbReference type="SUPFAM" id="SSF52540">
    <property type="entry name" value="P-loop containing nucleoside triphosphate hydrolases"/>
    <property type="match status" value="1"/>
</dbReference>
<dbReference type="PROSITE" id="PS51192">
    <property type="entry name" value="HELICASE_ATP_BIND_1"/>
    <property type="match status" value="1"/>
</dbReference>
<dbReference type="PROSITE" id="PS51194">
    <property type="entry name" value="HELICASE_CTER"/>
    <property type="match status" value="1"/>
</dbReference>